<gene>
    <name type="primary">Fbxo33</name>
</gene>
<comment type="function">
    <text evidence="4">Substrate recognition component of a SCF (SKP1-CUL1-F-box protein) E3 ubiquitin-protein ligase complex which mediates the ubiquitination and subsequent proteasomal degradation of target proteins. Probably recognizes and binds to phosphorylated target proteins. Recognizes YBX1.</text>
</comment>
<comment type="pathway">
    <text>Protein modification; protein ubiquitination.</text>
</comment>
<comment type="subunit">
    <text evidence="1">Part of the SCF (SKP1-CUL1-F-box) E3 ubiquitin-protein ligase complex SCF(FBXO33) formed of CUL1, SKP1, RBX1 and FBXO33. Interacts via its N-terminus with YBX1 CSD domain. Directly interacts with SKP1 and CUL1 (By similarity).</text>
</comment>
<name>FBX33_MOUSE</name>
<proteinExistence type="evidence at protein level"/>
<evidence type="ECO:0000250" key="1"/>
<evidence type="ECO:0000255" key="2">
    <source>
        <dbReference type="PROSITE-ProRule" id="PRU00080"/>
    </source>
</evidence>
<evidence type="ECO:0000256" key="3">
    <source>
        <dbReference type="SAM" id="MobiDB-lite"/>
    </source>
</evidence>
<evidence type="ECO:0000269" key="4">
    <source>
    </source>
</evidence>
<evidence type="ECO:0000305" key="5"/>
<dbReference type="EMBL" id="AC147101">
    <property type="status" value="NOT_ANNOTATED_CDS"/>
    <property type="molecule type" value="Genomic_DNA"/>
</dbReference>
<dbReference type="EMBL" id="BC006669">
    <property type="protein sequence ID" value="AAH06669.1"/>
    <property type="molecule type" value="mRNA"/>
</dbReference>
<dbReference type="EMBL" id="BC020022">
    <property type="protein sequence ID" value="AAH20022.1"/>
    <property type="molecule type" value="mRNA"/>
</dbReference>
<dbReference type="CCDS" id="CCDS49072.1"/>
<dbReference type="RefSeq" id="NP_001028328.2">
    <property type="nucleotide sequence ID" value="NM_001033156.4"/>
</dbReference>
<dbReference type="BioGRID" id="214164">
    <property type="interactions" value="2"/>
</dbReference>
<dbReference type="FunCoup" id="Q8VE08">
    <property type="interactions" value="583"/>
</dbReference>
<dbReference type="STRING" id="10090.ENSMUSP00000035948"/>
<dbReference type="PhosphoSitePlus" id="Q8VE08"/>
<dbReference type="PaxDb" id="10090-ENSMUSP00000035948"/>
<dbReference type="ProteomicsDB" id="271674"/>
<dbReference type="Antibodypedia" id="23412">
    <property type="antibodies" value="75 antibodies from 17 providers"/>
</dbReference>
<dbReference type="DNASU" id="70611"/>
<dbReference type="Ensembl" id="ENSMUST00000043204.8">
    <property type="protein sequence ID" value="ENSMUSP00000035948.8"/>
    <property type="gene ID" value="ENSMUSG00000035329.8"/>
</dbReference>
<dbReference type="GeneID" id="70611"/>
<dbReference type="KEGG" id="mmu:70611"/>
<dbReference type="UCSC" id="uc007nqj.2">
    <property type="organism name" value="mouse"/>
</dbReference>
<dbReference type="AGR" id="MGI:1917861"/>
<dbReference type="CTD" id="254170"/>
<dbReference type="MGI" id="MGI:1917861">
    <property type="gene designation" value="Fbxo33"/>
</dbReference>
<dbReference type="VEuPathDB" id="HostDB:ENSMUSG00000035329"/>
<dbReference type="eggNOG" id="ENOG502QPU4">
    <property type="taxonomic scope" value="Eukaryota"/>
</dbReference>
<dbReference type="GeneTree" id="ENSGT00390000017718"/>
<dbReference type="HOGENOM" id="CLU_042932_0_0_1"/>
<dbReference type="InParanoid" id="Q8VE08"/>
<dbReference type="OMA" id="NSRQMKW"/>
<dbReference type="OrthoDB" id="8757000at2759"/>
<dbReference type="PhylomeDB" id="Q8VE08"/>
<dbReference type="TreeFam" id="TF321665"/>
<dbReference type="UniPathway" id="UPA00143"/>
<dbReference type="BioGRID-ORCS" id="70611">
    <property type="hits" value="1 hit in 77 CRISPR screens"/>
</dbReference>
<dbReference type="ChiTaRS" id="Fbxo33">
    <property type="organism name" value="mouse"/>
</dbReference>
<dbReference type="PRO" id="PR:Q8VE08"/>
<dbReference type="Proteomes" id="UP000000589">
    <property type="component" value="Chromosome 12"/>
</dbReference>
<dbReference type="RNAct" id="Q8VE08">
    <property type="molecule type" value="protein"/>
</dbReference>
<dbReference type="Bgee" id="ENSMUSG00000035329">
    <property type="expression patterns" value="Expressed in choroid plexus epithelium and 247 other cell types or tissues"/>
</dbReference>
<dbReference type="ExpressionAtlas" id="Q8VE08">
    <property type="expression patterns" value="baseline and differential"/>
</dbReference>
<dbReference type="GO" id="GO:0016567">
    <property type="term" value="P:protein ubiquitination"/>
    <property type="evidence" value="ECO:0007669"/>
    <property type="project" value="UniProtKB-UniPathway"/>
</dbReference>
<dbReference type="CDD" id="cd22104">
    <property type="entry name" value="F-box_FBXO33"/>
    <property type="match status" value="1"/>
</dbReference>
<dbReference type="Gene3D" id="1.20.1280.50">
    <property type="match status" value="1"/>
</dbReference>
<dbReference type="Gene3D" id="3.80.10.10">
    <property type="entry name" value="Ribonuclease Inhibitor"/>
    <property type="match status" value="1"/>
</dbReference>
<dbReference type="InterPro" id="IPR036047">
    <property type="entry name" value="F-box-like_dom_sf"/>
</dbReference>
<dbReference type="InterPro" id="IPR001810">
    <property type="entry name" value="F-box_dom"/>
</dbReference>
<dbReference type="InterPro" id="IPR032675">
    <property type="entry name" value="LRR_dom_sf"/>
</dbReference>
<dbReference type="PANTHER" id="PTHR20933">
    <property type="entry name" value="F-BOX ONLY PROTEIN 33"/>
    <property type="match status" value="1"/>
</dbReference>
<dbReference type="PANTHER" id="PTHR20933:SF3">
    <property type="entry name" value="F-BOX ONLY PROTEIN 33"/>
    <property type="match status" value="1"/>
</dbReference>
<dbReference type="Pfam" id="PF12937">
    <property type="entry name" value="F-box-like"/>
    <property type="match status" value="1"/>
</dbReference>
<dbReference type="SMART" id="SM00256">
    <property type="entry name" value="FBOX"/>
    <property type="match status" value="1"/>
</dbReference>
<dbReference type="SUPFAM" id="SSF81383">
    <property type="entry name" value="F-box domain"/>
    <property type="match status" value="1"/>
</dbReference>
<dbReference type="PROSITE" id="PS50181">
    <property type="entry name" value="FBOX"/>
    <property type="match status" value="1"/>
</dbReference>
<organism>
    <name type="scientific">Mus musculus</name>
    <name type="common">Mouse</name>
    <dbReference type="NCBI Taxonomy" id="10090"/>
    <lineage>
        <taxon>Eukaryota</taxon>
        <taxon>Metazoa</taxon>
        <taxon>Chordata</taxon>
        <taxon>Craniata</taxon>
        <taxon>Vertebrata</taxon>
        <taxon>Euteleostomi</taxon>
        <taxon>Mammalia</taxon>
        <taxon>Eutheria</taxon>
        <taxon>Euarchontoglires</taxon>
        <taxon>Glires</taxon>
        <taxon>Rodentia</taxon>
        <taxon>Myomorpha</taxon>
        <taxon>Muroidea</taxon>
        <taxon>Muridae</taxon>
        <taxon>Murinae</taxon>
        <taxon>Mus</taxon>
        <taxon>Mus</taxon>
    </lineage>
</organism>
<reference key="1">
    <citation type="journal article" date="2009" name="PLoS Biol.">
        <title>Lineage-specific biology revealed by a finished genome assembly of the mouse.</title>
        <authorList>
            <person name="Church D.M."/>
            <person name="Goodstadt L."/>
            <person name="Hillier L.W."/>
            <person name="Zody M.C."/>
            <person name="Goldstein S."/>
            <person name="She X."/>
            <person name="Bult C.J."/>
            <person name="Agarwala R."/>
            <person name="Cherry J.L."/>
            <person name="DiCuccio M."/>
            <person name="Hlavina W."/>
            <person name="Kapustin Y."/>
            <person name="Meric P."/>
            <person name="Maglott D."/>
            <person name="Birtle Z."/>
            <person name="Marques A.C."/>
            <person name="Graves T."/>
            <person name="Zhou S."/>
            <person name="Teague B."/>
            <person name="Potamousis K."/>
            <person name="Churas C."/>
            <person name="Place M."/>
            <person name="Herschleb J."/>
            <person name="Runnheim R."/>
            <person name="Forrest D."/>
            <person name="Amos-Landgraf J."/>
            <person name="Schwartz D.C."/>
            <person name="Cheng Z."/>
            <person name="Lindblad-Toh K."/>
            <person name="Eichler E.E."/>
            <person name="Ponting C.P."/>
        </authorList>
    </citation>
    <scope>NUCLEOTIDE SEQUENCE [LARGE SCALE GENOMIC DNA]</scope>
    <source>
        <strain>C57BL/6J</strain>
    </source>
</reference>
<reference key="2">
    <citation type="journal article" date="2004" name="Genome Res.">
        <title>The status, quality, and expansion of the NIH full-length cDNA project: the Mammalian Gene Collection (MGC).</title>
        <authorList>
            <consortium name="The MGC Project Team"/>
        </authorList>
    </citation>
    <scope>NUCLEOTIDE SEQUENCE [LARGE SCALE MRNA] OF 10-562</scope>
    <source>
        <strain>Czech II</strain>
        <strain>FVB/N</strain>
        <tissue>Mammary tumor</tissue>
    </source>
</reference>
<reference key="3">
    <citation type="journal article" date="2006" name="FEBS Lett.">
        <title>Proteasomal degradation of the multifunctional regulator YB-1 is mediated by an F-Box protein induced during programmed cell death.</title>
        <authorList>
            <person name="Lutz M."/>
            <person name="Wempe F."/>
            <person name="Bahr I."/>
            <person name="Zopf D."/>
            <person name="von Melchner H."/>
        </authorList>
    </citation>
    <scope>INTERACTION WITH YBX1</scope>
    <scope>IDENTIFICATION IN THE SCF(FBXO33) COMPLEX WITH CUL1; SKP1 AND RBX1</scope>
    <scope>FUNCTION IN UBIQUITINATION OF YBX1</scope>
</reference>
<keyword id="KW-1185">Reference proteome</keyword>
<keyword id="KW-0833">Ubl conjugation pathway</keyword>
<feature type="chain" id="PRO_0000314464" description="F-box only protein 33">
    <location>
        <begin position="1"/>
        <end position="562"/>
    </location>
</feature>
<feature type="domain" description="F-box" evidence="2">
    <location>
        <begin position="68"/>
        <end position="114"/>
    </location>
</feature>
<feature type="region of interest" description="Disordered" evidence="3">
    <location>
        <begin position="155"/>
        <end position="176"/>
    </location>
</feature>
<feature type="compositionally biased region" description="Gly residues" evidence="3">
    <location>
        <begin position="155"/>
        <end position="173"/>
    </location>
</feature>
<feature type="sequence conflict" description="In Ref. 2; AC147101." evidence="5" ref="2">
    <original>V</original>
    <variation>A</variation>
    <location>
        <position position="514"/>
    </location>
</feature>
<accession>Q8VE08</accession>
<accession>A0JLR4</accession>
<accession>E9QMJ3</accession>
<protein>
    <recommendedName>
        <fullName>F-box only protein 33</fullName>
    </recommendedName>
    <alternativeName>
        <fullName>AIG30-12-1</fullName>
    </alternativeName>
</protein>
<sequence>MLLFLSVPQPRPPGARTRAGAARLVRWRRRQRLRLLQLRRLRGLLRGLRRRPGTGGRRPSRMALCGQAAGAASLPSELIVHIFSFLPAPDRLRASASCSHWRECLFYPALWPQLRICLRVSPAEQPRLEFLMRKCGWFVRELRVEFAAENYLSGGGGPGDGGSGGGTDTGTGGEDGEALQLSSRWLEVLRIYLELVLCVLLSIRNNRNLQKFSLFGDISVVHQQGSLSSTYLSRVDPDGKKIKQIQQLFEEILSNSRQLKWLSCGFMLEIVTPTSLSSLSNPIANTMEHLSLLDNNIPGNSTLITAVELERFVNLRSLALDFCDFTAEMARVLTDSNHVPLQRLSLLVHNASVMLKSLDNMPNDEHWKALSRKSSSLRVYLMVFDIKSEDMLKILKPSIPLERVHFDSYVTCVSGAIVDLISRQYDKFLTHFILMNDMIDTSGFPDLSDNRNEDPLVLLAWRCTKLTLLAIHGYTVWAHNLIAIARLRGSDLKVLQVTEESIDFDQGELADQDVDPVQNLIEQVSLGLGQSWHAVLDIESLSVFTEPNRHFYREMQSFSEDI</sequence>